<feature type="chain" id="PRO_0000402158" description="Oxysterol-binding protein-related protein 1C">
    <location>
        <begin position="1"/>
        <end position="814"/>
    </location>
</feature>
<feature type="domain" description="PH" evidence="3">
    <location>
        <begin position="103"/>
        <end position="235"/>
    </location>
</feature>
<feature type="region of interest" description="Disordered" evidence="4">
    <location>
        <begin position="319"/>
        <end position="366"/>
    </location>
</feature>
<feature type="region of interest" description="Disordered" evidence="4">
    <location>
        <begin position="379"/>
        <end position="411"/>
    </location>
</feature>
<feature type="coiled-coil region" evidence="2">
    <location>
        <begin position="300"/>
        <end position="367"/>
    </location>
</feature>
<feature type="compositionally biased region" description="Acidic residues" evidence="4">
    <location>
        <begin position="347"/>
        <end position="366"/>
    </location>
</feature>
<feature type="compositionally biased region" description="Low complexity" evidence="4">
    <location>
        <begin position="379"/>
        <end position="394"/>
    </location>
</feature>
<feature type="compositionally biased region" description="Acidic residues" evidence="4">
    <location>
        <begin position="395"/>
        <end position="407"/>
    </location>
</feature>
<feature type="splice variant" id="VSP_040247" description="In isoform 2." evidence="6">
    <location>
        <position position="342"/>
    </location>
</feature>
<feature type="splice variant" id="VSP_040248" description="In isoform 2." evidence="6">
    <original>ARK</original>
    <variation>VIQ</variation>
    <location>
        <begin position="759"/>
        <end position="761"/>
    </location>
</feature>
<name>ORP1C_ARATH</name>
<accession>Q8L751</accession>
<accession>Q3E6U4</accession>
<accession>Q56XA3</accession>
<accession>Q56ZH2</accession>
<accession>Q9SUG2</accession>
<organism>
    <name type="scientific">Arabidopsis thaliana</name>
    <name type="common">Mouse-ear cress</name>
    <dbReference type="NCBI Taxonomy" id="3702"/>
    <lineage>
        <taxon>Eukaryota</taxon>
        <taxon>Viridiplantae</taxon>
        <taxon>Streptophyta</taxon>
        <taxon>Embryophyta</taxon>
        <taxon>Tracheophyta</taxon>
        <taxon>Spermatophyta</taxon>
        <taxon>Magnoliopsida</taxon>
        <taxon>eudicotyledons</taxon>
        <taxon>Gunneridae</taxon>
        <taxon>Pentapetalae</taxon>
        <taxon>rosids</taxon>
        <taxon>malvids</taxon>
        <taxon>Brassicales</taxon>
        <taxon>Brassicaceae</taxon>
        <taxon>Camelineae</taxon>
        <taxon>Arabidopsis</taxon>
    </lineage>
</organism>
<gene>
    <name type="primary">ORP1C</name>
    <name type="ordered locus">At4g08180</name>
    <name type="ORF">T12G13.20</name>
</gene>
<reference key="1">
    <citation type="journal article" date="1999" name="Nature">
        <title>Sequence and analysis of chromosome 4 of the plant Arabidopsis thaliana.</title>
        <authorList>
            <person name="Mayer K.F.X."/>
            <person name="Schueller C."/>
            <person name="Wambutt R."/>
            <person name="Murphy G."/>
            <person name="Volckaert G."/>
            <person name="Pohl T."/>
            <person name="Duesterhoeft A."/>
            <person name="Stiekema W."/>
            <person name="Entian K.-D."/>
            <person name="Terryn N."/>
            <person name="Harris B."/>
            <person name="Ansorge W."/>
            <person name="Brandt P."/>
            <person name="Grivell L.A."/>
            <person name="Rieger M."/>
            <person name="Weichselgartner M."/>
            <person name="de Simone V."/>
            <person name="Obermaier B."/>
            <person name="Mache R."/>
            <person name="Mueller M."/>
            <person name="Kreis M."/>
            <person name="Delseny M."/>
            <person name="Puigdomenech P."/>
            <person name="Watson M."/>
            <person name="Schmidtheini T."/>
            <person name="Reichert B."/>
            <person name="Portetelle D."/>
            <person name="Perez-Alonso M."/>
            <person name="Boutry M."/>
            <person name="Bancroft I."/>
            <person name="Vos P."/>
            <person name="Hoheisel J."/>
            <person name="Zimmermann W."/>
            <person name="Wedler H."/>
            <person name="Ridley P."/>
            <person name="Langham S.-A."/>
            <person name="McCullagh B."/>
            <person name="Bilham L."/>
            <person name="Robben J."/>
            <person name="van der Schueren J."/>
            <person name="Grymonprez B."/>
            <person name="Chuang Y.-J."/>
            <person name="Vandenbussche F."/>
            <person name="Braeken M."/>
            <person name="Weltjens I."/>
            <person name="Voet M."/>
            <person name="Bastiaens I."/>
            <person name="Aert R."/>
            <person name="Defoor E."/>
            <person name="Weitzenegger T."/>
            <person name="Bothe G."/>
            <person name="Ramsperger U."/>
            <person name="Hilbert H."/>
            <person name="Braun M."/>
            <person name="Holzer E."/>
            <person name="Brandt A."/>
            <person name="Peters S."/>
            <person name="van Staveren M."/>
            <person name="Dirkse W."/>
            <person name="Mooijman P."/>
            <person name="Klein Lankhorst R."/>
            <person name="Rose M."/>
            <person name="Hauf J."/>
            <person name="Koetter P."/>
            <person name="Berneiser S."/>
            <person name="Hempel S."/>
            <person name="Feldpausch M."/>
            <person name="Lamberth S."/>
            <person name="Van den Daele H."/>
            <person name="De Keyser A."/>
            <person name="Buysshaert C."/>
            <person name="Gielen J."/>
            <person name="Villarroel R."/>
            <person name="De Clercq R."/>
            <person name="van Montagu M."/>
            <person name="Rogers J."/>
            <person name="Cronin A."/>
            <person name="Quail M.A."/>
            <person name="Bray-Allen S."/>
            <person name="Clark L."/>
            <person name="Doggett J."/>
            <person name="Hall S."/>
            <person name="Kay M."/>
            <person name="Lennard N."/>
            <person name="McLay K."/>
            <person name="Mayes R."/>
            <person name="Pettett A."/>
            <person name="Rajandream M.A."/>
            <person name="Lyne M."/>
            <person name="Benes V."/>
            <person name="Rechmann S."/>
            <person name="Borkova D."/>
            <person name="Bloecker H."/>
            <person name="Scharfe M."/>
            <person name="Grimm M."/>
            <person name="Loehnert T.-H."/>
            <person name="Dose S."/>
            <person name="de Haan M."/>
            <person name="Maarse A.C."/>
            <person name="Schaefer M."/>
            <person name="Mueller-Auer S."/>
            <person name="Gabel C."/>
            <person name="Fuchs M."/>
            <person name="Fartmann B."/>
            <person name="Granderath K."/>
            <person name="Dauner D."/>
            <person name="Herzl A."/>
            <person name="Neumann S."/>
            <person name="Argiriou A."/>
            <person name="Vitale D."/>
            <person name="Liguori R."/>
            <person name="Piravandi E."/>
            <person name="Massenet O."/>
            <person name="Quigley F."/>
            <person name="Clabauld G."/>
            <person name="Muendlein A."/>
            <person name="Felber R."/>
            <person name="Schnabl S."/>
            <person name="Hiller R."/>
            <person name="Schmidt W."/>
            <person name="Lecharny A."/>
            <person name="Aubourg S."/>
            <person name="Chefdor F."/>
            <person name="Cooke R."/>
            <person name="Berger C."/>
            <person name="Monfort A."/>
            <person name="Casacuberta E."/>
            <person name="Gibbons T."/>
            <person name="Weber N."/>
            <person name="Vandenbol M."/>
            <person name="Bargues M."/>
            <person name="Terol J."/>
            <person name="Torres A."/>
            <person name="Perez-Perez A."/>
            <person name="Purnelle B."/>
            <person name="Bent E."/>
            <person name="Johnson S."/>
            <person name="Tacon D."/>
            <person name="Jesse T."/>
            <person name="Heijnen L."/>
            <person name="Schwarz S."/>
            <person name="Scholler P."/>
            <person name="Heber S."/>
            <person name="Francs P."/>
            <person name="Bielke C."/>
            <person name="Frishman D."/>
            <person name="Haase D."/>
            <person name="Lemcke K."/>
            <person name="Mewes H.-W."/>
            <person name="Stocker S."/>
            <person name="Zaccaria P."/>
            <person name="Bevan M."/>
            <person name="Wilson R.K."/>
            <person name="de la Bastide M."/>
            <person name="Habermann K."/>
            <person name="Parnell L."/>
            <person name="Dedhia N."/>
            <person name="Gnoj L."/>
            <person name="Schutz K."/>
            <person name="Huang E."/>
            <person name="Spiegel L."/>
            <person name="Sekhon M."/>
            <person name="Murray J."/>
            <person name="Sheet P."/>
            <person name="Cordes M."/>
            <person name="Abu-Threideh J."/>
            <person name="Stoneking T."/>
            <person name="Kalicki J."/>
            <person name="Graves T."/>
            <person name="Harmon G."/>
            <person name="Edwards J."/>
            <person name="Latreille P."/>
            <person name="Courtney L."/>
            <person name="Cloud J."/>
            <person name="Abbott A."/>
            <person name="Scott K."/>
            <person name="Johnson D."/>
            <person name="Minx P."/>
            <person name="Bentley D."/>
            <person name="Fulton B."/>
            <person name="Miller N."/>
            <person name="Greco T."/>
            <person name="Kemp K."/>
            <person name="Kramer J."/>
            <person name="Fulton L."/>
            <person name="Mardis E."/>
            <person name="Dante M."/>
            <person name="Pepin K."/>
            <person name="Hillier L.W."/>
            <person name="Nelson J."/>
            <person name="Spieth J."/>
            <person name="Ryan E."/>
            <person name="Andrews S."/>
            <person name="Geisel C."/>
            <person name="Layman D."/>
            <person name="Du H."/>
            <person name="Ali J."/>
            <person name="Berghoff A."/>
            <person name="Jones K."/>
            <person name="Drone K."/>
            <person name="Cotton M."/>
            <person name="Joshu C."/>
            <person name="Antonoiu B."/>
            <person name="Zidanic M."/>
            <person name="Strong C."/>
            <person name="Sun H."/>
            <person name="Lamar B."/>
            <person name="Yordan C."/>
            <person name="Ma P."/>
            <person name="Zhong J."/>
            <person name="Preston R."/>
            <person name="Vil D."/>
            <person name="Shekher M."/>
            <person name="Matero A."/>
            <person name="Shah R."/>
            <person name="Swaby I.K."/>
            <person name="O'Shaughnessy A."/>
            <person name="Rodriguez M."/>
            <person name="Hoffman J."/>
            <person name="Till S."/>
            <person name="Granat S."/>
            <person name="Shohdy N."/>
            <person name="Hasegawa A."/>
            <person name="Hameed A."/>
            <person name="Lodhi M."/>
            <person name="Johnson A."/>
            <person name="Chen E."/>
            <person name="Marra M.A."/>
            <person name="Martienssen R."/>
            <person name="McCombie W.R."/>
        </authorList>
    </citation>
    <scope>NUCLEOTIDE SEQUENCE [LARGE SCALE GENOMIC DNA]</scope>
    <source>
        <strain>cv. Columbia</strain>
    </source>
</reference>
<reference key="2">
    <citation type="journal article" date="2017" name="Plant J.">
        <title>Araport11: a complete reannotation of the Arabidopsis thaliana reference genome.</title>
        <authorList>
            <person name="Cheng C.Y."/>
            <person name="Krishnakumar V."/>
            <person name="Chan A.P."/>
            <person name="Thibaud-Nissen F."/>
            <person name="Schobel S."/>
            <person name="Town C.D."/>
        </authorList>
    </citation>
    <scope>GENOME REANNOTATION</scope>
    <source>
        <strain>cv. Columbia</strain>
    </source>
</reference>
<reference key="3">
    <citation type="journal article" date="2003" name="Science">
        <title>Empirical analysis of transcriptional activity in the Arabidopsis genome.</title>
        <authorList>
            <person name="Yamada K."/>
            <person name="Lim J."/>
            <person name="Dale J.M."/>
            <person name="Chen H."/>
            <person name="Shinn P."/>
            <person name="Palm C.J."/>
            <person name="Southwick A.M."/>
            <person name="Wu H.C."/>
            <person name="Kim C.J."/>
            <person name="Nguyen M."/>
            <person name="Pham P.K."/>
            <person name="Cheuk R.F."/>
            <person name="Karlin-Newmann G."/>
            <person name="Liu S.X."/>
            <person name="Lam B."/>
            <person name="Sakano H."/>
            <person name="Wu T."/>
            <person name="Yu G."/>
            <person name="Miranda M."/>
            <person name="Quach H.L."/>
            <person name="Tripp M."/>
            <person name="Chang C.H."/>
            <person name="Lee J.M."/>
            <person name="Toriumi M.J."/>
            <person name="Chan M.M."/>
            <person name="Tang C.C."/>
            <person name="Onodera C.S."/>
            <person name="Deng J.M."/>
            <person name="Akiyama K."/>
            <person name="Ansari Y."/>
            <person name="Arakawa T."/>
            <person name="Banh J."/>
            <person name="Banno F."/>
            <person name="Bowser L."/>
            <person name="Brooks S.Y."/>
            <person name="Carninci P."/>
            <person name="Chao Q."/>
            <person name="Choy N."/>
            <person name="Enju A."/>
            <person name="Goldsmith A.D."/>
            <person name="Gurjal M."/>
            <person name="Hansen N.F."/>
            <person name="Hayashizaki Y."/>
            <person name="Johnson-Hopson C."/>
            <person name="Hsuan V.W."/>
            <person name="Iida K."/>
            <person name="Karnes M."/>
            <person name="Khan S."/>
            <person name="Koesema E."/>
            <person name="Ishida J."/>
            <person name="Jiang P.X."/>
            <person name="Jones T."/>
            <person name="Kawai J."/>
            <person name="Kamiya A."/>
            <person name="Meyers C."/>
            <person name="Nakajima M."/>
            <person name="Narusaka M."/>
            <person name="Seki M."/>
            <person name="Sakurai T."/>
            <person name="Satou M."/>
            <person name="Tamse R."/>
            <person name="Vaysberg M."/>
            <person name="Wallender E.K."/>
            <person name="Wong C."/>
            <person name="Yamamura Y."/>
            <person name="Yuan S."/>
            <person name="Shinozaki K."/>
            <person name="Davis R.W."/>
            <person name="Theologis A."/>
            <person name="Ecker J.R."/>
        </authorList>
    </citation>
    <scope>NUCLEOTIDE SEQUENCE [LARGE SCALE MRNA] (ISOFORM 1)</scope>
    <source>
        <strain>cv. Columbia</strain>
    </source>
</reference>
<reference key="4">
    <citation type="submission" date="2005-03" db="EMBL/GenBank/DDBJ databases">
        <title>Large-scale analysis of RIKEN Arabidopsis full-length (RAFL) cDNAs.</title>
        <authorList>
            <person name="Totoki Y."/>
            <person name="Seki M."/>
            <person name="Ishida J."/>
            <person name="Nakajima M."/>
            <person name="Enju A."/>
            <person name="Kamiya A."/>
            <person name="Narusaka M."/>
            <person name="Shin-i T."/>
            <person name="Nakagawa M."/>
            <person name="Sakamoto N."/>
            <person name="Oishi K."/>
            <person name="Kohara Y."/>
            <person name="Kobayashi M."/>
            <person name="Toyoda A."/>
            <person name="Sakaki Y."/>
            <person name="Sakurai T."/>
            <person name="Iida K."/>
            <person name="Akiyama K."/>
            <person name="Satou M."/>
            <person name="Toyoda T."/>
            <person name="Konagaya A."/>
            <person name="Carninci P."/>
            <person name="Kawai J."/>
            <person name="Hayashizaki Y."/>
            <person name="Shinozaki K."/>
        </authorList>
    </citation>
    <scope>NUCLEOTIDE SEQUENCE [LARGE SCALE MRNA] OF 413-814 AND 742-814</scope>
    <source>
        <strain>cv. Columbia</strain>
    </source>
</reference>
<reference key="5">
    <citation type="journal article" date="2006" name="Plant Mol. Biol.">
        <title>Identification and characterization of PiORP1, a Petunia oxysterol-binding-protein related protein involved in receptor-kinase mediated signaling in pollen, and analysis of the ORP gene family in Arabidopsis.</title>
        <authorList>
            <person name="Skirpan A.L."/>
            <person name="Dowd P.E."/>
            <person name="Sijacic P."/>
            <person name="Jaworski C.J."/>
            <person name="Gilroy S."/>
            <person name="Kao T.H."/>
        </authorList>
    </citation>
    <scope>TISSUE SPECIFICITY</scope>
    <scope>GENE FAMILY</scope>
    <scope>NOMENCLATURE</scope>
</reference>
<proteinExistence type="evidence at transcript level"/>
<keyword id="KW-0025">Alternative splicing</keyword>
<keyword id="KW-0175">Coiled coil</keyword>
<keyword id="KW-0445">Lipid transport</keyword>
<keyword id="KW-0446">Lipid-binding</keyword>
<keyword id="KW-1185">Reference proteome</keyword>
<keyword id="KW-0813">Transport</keyword>
<protein>
    <recommendedName>
        <fullName>Oxysterol-binding protein-related protein 1C</fullName>
    </recommendedName>
    <alternativeName>
        <fullName>OSBP-related protein 1C</fullName>
    </alternativeName>
</protein>
<comment type="function">
    <text evidence="1">May be involved in the transport of sterols.</text>
</comment>
<comment type="alternative products">
    <event type="alternative splicing"/>
    <isoform>
        <id>Q8L751-1</id>
        <name>1</name>
        <sequence type="displayed"/>
    </isoform>
    <isoform>
        <id>Q8L751-2</id>
        <name>2</name>
        <sequence type="described" ref="VSP_040247 VSP_040248"/>
    </isoform>
</comment>
<comment type="tissue specificity">
    <text evidence="5">Expressed in roots, leaves, stems, flowers and pollen.</text>
</comment>
<comment type="similarity">
    <text evidence="6">Belongs to the OSBP family.</text>
</comment>
<comment type="sequence caution" evidence="6">
    <conflict type="erroneous initiation">
        <sequence resource="EMBL-CDS" id="BAD94620"/>
    </conflict>
    <text>Truncated N-terminus.</text>
</comment>
<comment type="sequence caution" evidence="6">
    <conflict type="miscellaneous discrepancy">
        <sequence resource="EMBL" id="BX826423"/>
    </conflict>
    <text>Sequencing errors.</text>
</comment>
<comment type="sequence caution" evidence="6">
    <conflict type="erroneous gene model prediction">
        <sequence resource="EMBL-CDS" id="CAB45788"/>
    </conflict>
</comment>
<comment type="sequence caution" evidence="6">
    <conflict type="erroneous gene model prediction">
        <sequence resource="EMBL-CDS" id="CAB81154"/>
    </conflict>
</comment>
<dbReference type="EMBL" id="AL080252">
    <property type="protein sequence ID" value="CAB45788.1"/>
    <property type="status" value="ALT_SEQ"/>
    <property type="molecule type" value="Genomic_DNA"/>
</dbReference>
<dbReference type="EMBL" id="AL161510">
    <property type="protein sequence ID" value="CAB81154.1"/>
    <property type="status" value="ALT_SEQ"/>
    <property type="molecule type" value="Genomic_DNA"/>
</dbReference>
<dbReference type="EMBL" id="CP002687">
    <property type="protein sequence ID" value="AEE82605.1"/>
    <property type="molecule type" value="Genomic_DNA"/>
</dbReference>
<dbReference type="EMBL" id="CP002687">
    <property type="protein sequence ID" value="AEE82606.1"/>
    <property type="molecule type" value="Genomic_DNA"/>
</dbReference>
<dbReference type="EMBL" id="CP002687">
    <property type="protein sequence ID" value="ANM66076.1"/>
    <property type="molecule type" value="Genomic_DNA"/>
</dbReference>
<dbReference type="EMBL" id="AY139750">
    <property type="protein sequence ID" value="AAM98072.1"/>
    <property type="molecule type" value="mRNA"/>
</dbReference>
<dbReference type="EMBL" id="BX826423">
    <property type="status" value="NOT_ANNOTATED_CDS"/>
    <property type="molecule type" value="mRNA"/>
</dbReference>
<dbReference type="EMBL" id="AK220993">
    <property type="protein sequence ID" value="BAD94620.1"/>
    <property type="status" value="ALT_INIT"/>
    <property type="molecule type" value="mRNA"/>
</dbReference>
<dbReference type="EMBL" id="AK221773">
    <property type="protein sequence ID" value="BAD93875.1"/>
    <property type="molecule type" value="mRNA"/>
</dbReference>
<dbReference type="PIR" id="T10545">
    <property type="entry name" value="T10545"/>
</dbReference>
<dbReference type="RefSeq" id="NP_001319881.1">
    <molecule id="Q8L751-1"/>
    <property type="nucleotide sequence ID" value="NM_001340578.1"/>
</dbReference>
<dbReference type="RefSeq" id="NP_192558.2">
    <molecule id="Q8L751-1"/>
    <property type="nucleotide sequence ID" value="NM_116887.3"/>
</dbReference>
<dbReference type="RefSeq" id="NP_974518.1">
    <molecule id="Q8L751-2"/>
    <property type="nucleotide sequence ID" value="NM_202789.1"/>
</dbReference>
<dbReference type="SMR" id="Q8L751"/>
<dbReference type="FunCoup" id="Q8L751">
    <property type="interactions" value="3353"/>
</dbReference>
<dbReference type="STRING" id="3702.Q8L751"/>
<dbReference type="iPTMnet" id="Q8L751"/>
<dbReference type="PaxDb" id="3702-AT4G08180.1"/>
<dbReference type="ProteomicsDB" id="248736">
    <molecule id="Q8L751-1"/>
</dbReference>
<dbReference type="EnsemblPlants" id="AT4G08180.1">
    <molecule id="Q8L751-1"/>
    <property type="protein sequence ID" value="AT4G08180.1"/>
    <property type="gene ID" value="AT4G08180"/>
</dbReference>
<dbReference type="EnsemblPlants" id="AT4G08180.3">
    <molecule id="Q8L751-2"/>
    <property type="protein sequence ID" value="AT4G08180.3"/>
    <property type="gene ID" value="AT4G08180"/>
</dbReference>
<dbReference type="EnsemblPlants" id="AT4G08180.4">
    <molecule id="Q8L751-1"/>
    <property type="protein sequence ID" value="AT4G08180.4"/>
    <property type="gene ID" value="AT4G08180"/>
</dbReference>
<dbReference type="GeneID" id="826368"/>
<dbReference type="Gramene" id="AT4G08180.1">
    <molecule id="Q8L751-1"/>
    <property type="protein sequence ID" value="AT4G08180.1"/>
    <property type="gene ID" value="AT4G08180"/>
</dbReference>
<dbReference type="Gramene" id="AT4G08180.3">
    <molecule id="Q8L751-2"/>
    <property type="protein sequence ID" value="AT4G08180.3"/>
    <property type="gene ID" value="AT4G08180"/>
</dbReference>
<dbReference type="Gramene" id="AT4G08180.4">
    <molecule id="Q8L751-1"/>
    <property type="protein sequence ID" value="AT4G08180.4"/>
    <property type="gene ID" value="AT4G08180"/>
</dbReference>
<dbReference type="KEGG" id="ath:AT4G08180"/>
<dbReference type="Araport" id="AT4G08180"/>
<dbReference type="TAIR" id="AT4G08180">
    <property type="gene designation" value="ORP1C"/>
</dbReference>
<dbReference type="eggNOG" id="KOG1737">
    <property type="taxonomic scope" value="Eukaryota"/>
</dbReference>
<dbReference type="HOGENOM" id="CLU_007105_0_1_1"/>
<dbReference type="InParanoid" id="Q8L751"/>
<dbReference type="OMA" id="WDEKMDY"/>
<dbReference type="PhylomeDB" id="Q8L751"/>
<dbReference type="PRO" id="PR:Q8L751"/>
<dbReference type="Proteomes" id="UP000006548">
    <property type="component" value="Chromosome 4"/>
</dbReference>
<dbReference type="ExpressionAtlas" id="Q8L751">
    <property type="expression patterns" value="baseline and differential"/>
</dbReference>
<dbReference type="GO" id="GO:0008289">
    <property type="term" value="F:lipid binding"/>
    <property type="evidence" value="ECO:0007669"/>
    <property type="project" value="UniProtKB-KW"/>
</dbReference>
<dbReference type="GO" id="GO:0006869">
    <property type="term" value="P:lipid transport"/>
    <property type="evidence" value="ECO:0007669"/>
    <property type="project" value="UniProtKB-KW"/>
</dbReference>
<dbReference type="CDD" id="cd13294">
    <property type="entry name" value="PH_ORP_plant"/>
    <property type="match status" value="1"/>
</dbReference>
<dbReference type="FunFam" id="2.40.160.120:FF:000006">
    <property type="entry name" value="oxysterol-binding protein-related protein 1D isoform X1"/>
    <property type="match status" value="1"/>
</dbReference>
<dbReference type="FunFam" id="3.30.70.3490:FF:000013">
    <property type="entry name" value="Oxysterol-binding protein-related protein 2A"/>
    <property type="match status" value="1"/>
</dbReference>
<dbReference type="Gene3D" id="2.40.160.120">
    <property type="match status" value="1"/>
</dbReference>
<dbReference type="Gene3D" id="3.30.70.3490">
    <property type="match status" value="1"/>
</dbReference>
<dbReference type="Gene3D" id="2.30.29.30">
    <property type="entry name" value="Pleckstrin-homology domain (PH domain)/Phosphotyrosine-binding domain (PTB)"/>
    <property type="match status" value="1"/>
</dbReference>
<dbReference type="InterPro" id="IPR037239">
    <property type="entry name" value="OSBP_sf"/>
</dbReference>
<dbReference type="InterPro" id="IPR000648">
    <property type="entry name" value="Oxysterol-bd"/>
</dbReference>
<dbReference type="InterPro" id="IPR011993">
    <property type="entry name" value="PH-like_dom_sf"/>
</dbReference>
<dbReference type="InterPro" id="IPR001849">
    <property type="entry name" value="PH_domain"/>
</dbReference>
<dbReference type="PANTHER" id="PTHR10972">
    <property type="entry name" value="OXYSTEROL-BINDING PROTEIN-RELATED"/>
    <property type="match status" value="1"/>
</dbReference>
<dbReference type="PANTHER" id="PTHR10972:SF96">
    <property type="entry name" value="OXYSTEROL-BINDING PROTEIN-RELATED PROTEIN 1A-RELATED"/>
    <property type="match status" value="1"/>
</dbReference>
<dbReference type="Pfam" id="PF01237">
    <property type="entry name" value="Oxysterol_BP"/>
    <property type="match status" value="1"/>
</dbReference>
<dbReference type="Pfam" id="PF15413">
    <property type="entry name" value="PH_11"/>
    <property type="match status" value="1"/>
</dbReference>
<dbReference type="SMART" id="SM00233">
    <property type="entry name" value="PH"/>
    <property type="match status" value="1"/>
</dbReference>
<dbReference type="SUPFAM" id="SSF144000">
    <property type="entry name" value="Oxysterol-binding protein-like"/>
    <property type="match status" value="1"/>
</dbReference>
<dbReference type="SUPFAM" id="SSF50729">
    <property type="entry name" value="PH domain-like"/>
    <property type="match status" value="1"/>
</dbReference>
<dbReference type="PROSITE" id="PS50003">
    <property type="entry name" value="PH_DOMAIN"/>
    <property type="match status" value="1"/>
</dbReference>
<evidence type="ECO:0000250" key="1"/>
<evidence type="ECO:0000255" key="2"/>
<evidence type="ECO:0000255" key="3">
    <source>
        <dbReference type="PROSITE-ProRule" id="PRU00145"/>
    </source>
</evidence>
<evidence type="ECO:0000256" key="4">
    <source>
        <dbReference type="SAM" id="MobiDB-lite"/>
    </source>
</evidence>
<evidence type="ECO:0000269" key="5">
    <source>
    </source>
</evidence>
<evidence type="ECO:0000305" key="6"/>
<sequence>MHPFCCVTTVSDHSPSMPPLPEPQPPLPNYAADFGSARSEPIITRSASQSYNHSGQFNNNLIHSLSFNHHQSDVTDRLGQRVLALPAAVREPPVDVKINDIVGNGIAGILYKWVNYGRGWRPRWFVLQDGVLSYYKIHGPDKIFVSPETEKGSKVIGDESARMISRHNRRGGSSSSCQLRRKPFGEVHLKVSSVRESRSDDKRFSIFTGTKRLHLRAETREDRTTWVEALQAVKDMFPRMSNSELMAPTNNLAMSTEKIRLRLIEEGVSELAIQDCEQIMKSEFSALQSQLVLLKQKQWLLIDTLRQLETEKVDLENTVVDESQRQADNGCSGELRHEKFSEGTATESDDDNERGDAAEEEFDEEENTFFDTRDFLSSSSFKSSGSGFRTSSFSSDEDGFESEDDIDPSIKSIGCNYPRVKRRKNLPDPVEKEKSVSLWSMIKDNIGKDLTKVCLPVYFNEPLSSLQKCFEDLEYSYLLDRAFEYGKRGNSLMRILNVAAFAVSGYASTEGRICKPFNPLLGETYEADYPDKGLRFFSEKVSHHPMVVACHCDGTGWKFWGDSNLRSKFWGRSIQLDPVGVLTLQFDDGEILQWSKVTTSIYNLILGKLYCDHYGTMRIEGSAEYSCKLKFKEQSIIDRNPHQVHGIVQNKSGKTVATMFGKWDESIHFVTGDCSGKGKLSEDMSGAQLLWKRSKPPGNATKYNLTRFAITLNELTPGLKERLPPTDSRLRPDQRYLENGEFEMANTEKLRLEQRQRQARKMQERGWKPRWFMKEKGSESYRYKGGYWEAREDGSWVDCPDIFGHIDSDQQMIE</sequence>